<dbReference type="EMBL" id="CR942432">
    <property type="protein sequence ID" value="CAJ83157.1"/>
    <property type="molecule type" value="mRNA"/>
</dbReference>
<dbReference type="EMBL" id="BC089069">
    <property type="protein sequence ID" value="AAH89069.1"/>
    <property type="molecule type" value="mRNA"/>
</dbReference>
<dbReference type="EMBL" id="BC157542">
    <property type="protein sequence ID" value="AAI57543.1"/>
    <property type="molecule type" value="mRNA"/>
</dbReference>
<dbReference type="RefSeq" id="NP_001165760.1">
    <property type="nucleotide sequence ID" value="NM_001172289.2"/>
</dbReference>
<dbReference type="SMR" id="Q28C65"/>
<dbReference type="FunCoup" id="Q28C65">
    <property type="interactions" value="2084"/>
</dbReference>
<dbReference type="STRING" id="8364.ENSXETP00000048386"/>
<dbReference type="GeneID" id="548352"/>
<dbReference type="KEGG" id="xtr:548352"/>
<dbReference type="AGR" id="Xenbase:XB-GENE-992842"/>
<dbReference type="CTD" id="27335"/>
<dbReference type="Xenbase" id="XB-GENE-992842">
    <property type="gene designation" value="eif3k"/>
</dbReference>
<dbReference type="InParanoid" id="Q28C65"/>
<dbReference type="OMA" id="GDDLCAD"/>
<dbReference type="OrthoDB" id="337745at2759"/>
<dbReference type="Reactome" id="R-XTR-156827">
    <property type="pathway name" value="L13a-mediated translational silencing of Ceruloplasmin expression"/>
</dbReference>
<dbReference type="Reactome" id="R-XTR-72689">
    <property type="pathway name" value="Formation of a pool of free 40S subunits"/>
</dbReference>
<dbReference type="Reactome" id="R-XTR-72695">
    <property type="pathway name" value="Formation of the ternary complex, and subsequently, the 43S complex"/>
</dbReference>
<dbReference type="Reactome" id="R-XTR-72702">
    <property type="pathway name" value="Ribosomal scanning and start codon recognition"/>
</dbReference>
<dbReference type="Proteomes" id="UP000008143">
    <property type="component" value="Chromosome 8"/>
</dbReference>
<dbReference type="Bgee" id="ENSXETG00000024723">
    <property type="expression patterns" value="Expressed in heart and 25 other cell types or tissues"/>
</dbReference>
<dbReference type="GO" id="GO:0016282">
    <property type="term" value="C:eukaryotic 43S preinitiation complex"/>
    <property type="evidence" value="ECO:0007669"/>
    <property type="project" value="UniProtKB-UniRule"/>
</dbReference>
<dbReference type="GO" id="GO:0033290">
    <property type="term" value="C:eukaryotic 48S preinitiation complex"/>
    <property type="evidence" value="ECO:0007669"/>
    <property type="project" value="UniProtKB-UniRule"/>
</dbReference>
<dbReference type="GO" id="GO:0005852">
    <property type="term" value="C:eukaryotic translation initiation factor 3 complex"/>
    <property type="evidence" value="ECO:0000250"/>
    <property type="project" value="UniProtKB"/>
</dbReference>
<dbReference type="GO" id="GO:0005634">
    <property type="term" value="C:nucleus"/>
    <property type="evidence" value="ECO:0007669"/>
    <property type="project" value="UniProtKB-SubCell"/>
</dbReference>
<dbReference type="GO" id="GO:0043022">
    <property type="term" value="F:ribosome binding"/>
    <property type="evidence" value="ECO:0007669"/>
    <property type="project" value="InterPro"/>
</dbReference>
<dbReference type="GO" id="GO:0003723">
    <property type="term" value="F:RNA binding"/>
    <property type="evidence" value="ECO:0007669"/>
    <property type="project" value="UniProtKB-UniRule"/>
</dbReference>
<dbReference type="GO" id="GO:0003743">
    <property type="term" value="F:translation initiation factor activity"/>
    <property type="evidence" value="ECO:0007669"/>
    <property type="project" value="UniProtKB-UniRule"/>
</dbReference>
<dbReference type="GO" id="GO:0001732">
    <property type="term" value="P:formation of cytoplasmic translation initiation complex"/>
    <property type="evidence" value="ECO:0007669"/>
    <property type="project" value="UniProtKB-UniRule"/>
</dbReference>
<dbReference type="GO" id="GO:0006446">
    <property type="term" value="P:regulation of translational initiation"/>
    <property type="evidence" value="ECO:0007669"/>
    <property type="project" value="InterPro"/>
</dbReference>
<dbReference type="GO" id="GO:0006413">
    <property type="term" value="P:translational initiation"/>
    <property type="evidence" value="ECO:0000250"/>
    <property type="project" value="UniProtKB"/>
</dbReference>
<dbReference type="FunFam" id="1.10.10.10:FF:000212">
    <property type="entry name" value="Eukaryotic translation initiation factor 3 subunit K"/>
    <property type="match status" value="1"/>
</dbReference>
<dbReference type="FunFam" id="1.25.40.250:FF:000001">
    <property type="entry name" value="Eukaryotic translation initiation factor 3 subunit K"/>
    <property type="match status" value="1"/>
</dbReference>
<dbReference type="Gene3D" id="1.25.40.250">
    <property type="entry name" value="ARM repeat, domain 1"/>
    <property type="match status" value="1"/>
</dbReference>
<dbReference type="Gene3D" id="1.10.10.10">
    <property type="entry name" value="Winged helix-like DNA-binding domain superfamily/Winged helix DNA-binding domain"/>
    <property type="match status" value="1"/>
</dbReference>
<dbReference type="HAMAP" id="MF_03010">
    <property type="entry name" value="eIF3k"/>
    <property type="match status" value="1"/>
</dbReference>
<dbReference type="InterPro" id="IPR016024">
    <property type="entry name" value="ARM-type_fold"/>
</dbReference>
<dbReference type="InterPro" id="IPR033464">
    <property type="entry name" value="CSN8_PSD8_EIF3K"/>
</dbReference>
<dbReference type="InterPro" id="IPR009374">
    <property type="entry name" value="eIF3k"/>
</dbReference>
<dbReference type="InterPro" id="IPR000717">
    <property type="entry name" value="PCI_dom"/>
</dbReference>
<dbReference type="InterPro" id="IPR016020">
    <property type="entry name" value="Transl_init_fac_sub12_N_euk"/>
</dbReference>
<dbReference type="InterPro" id="IPR036388">
    <property type="entry name" value="WH-like_DNA-bd_sf"/>
</dbReference>
<dbReference type="InterPro" id="IPR036390">
    <property type="entry name" value="WH_DNA-bd_sf"/>
</dbReference>
<dbReference type="PANTHER" id="PTHR13022">
    <property type="entry name" value="EUKARYOTIC TRANSLATION INITIATION FACTOR 3 SUBUNIT 11"/>
    <property type="match status" value="1"/>
</dbReference>
<dbReference type="PANTHER" id="PTHR13022:SF0">
    <property type="entry name" value="EUKARYOTIC TRANSLATION INITIATION FACTOR 3 SUBUNIT K"/>
    <property type="match status" value="1"/>
</dbReference>
<dbReference type="Pfam" id="PF10075">
    <property type="entry name" value="CSN8_PSD8_EIF3K"/>
    <property type="match status" value="1"/>
</dbReference>
<dbReference type="SUPFAM" id="SSF48371">
    <property type="entry name" value="ARM repeat"/>
    <property type="match status" value="1"/>
</dbReference>
<dbReference type="SUPFAM" id="SSF46785">
    <property type="entry name" value="Winged helix' DNA-binding domain"/>
    <property type="match status" value="1"/>
</dbReference>
<dbReference type="PROSITE" id="PS50250">
    <property type="entry name" value="PCI"/>
    <property type="match status" value="1"/>
</dbReference>
<name>EIF3K_XENTR</name>
<comment type="function">
    <text evidence="1">Component of the eukaryotic translation initiation factor 3 (eIF-3) complex, which is involved in protein synthesis of a specialized repertoire of mRNAs and, together with other initiation factors, stimulates binding of mRNA and methionyl-tRNAi to the 40S ribosome. The eIF-3 complex specifically targets and initiates translation of a subset of mRNAs involved in cell proliferation.</text>
</comment>
<comment type="subunit">
    <text evidence="1">Component of the eukaryotic translation initiation factor 3 (eIF-3) complex, which is composed of 13 subunits: eif3a, eif3b, eif3c, eif3d, eif3e, eif3f, eif3g, eif3h, eif3i, eif3j, eif3k, eif3l and eif3m.</text>
</comment>
<comment type="subcellular location">
    <subcellularLocation>
        <location evidence="1">Nucleus</location>
    </subcellularLocation>
    <subcellularLocation>
        <location evidence="1">Cytoplasm</location>
    </subcellularLocation>
</comment>
<comment type="similarity">
    <text evidence="1">Belongs to the eIF-3 subunit K family.</text>
</comment>
<feature type="chain" id="PRO_0000365033" description="Eukaryotic translation initiation factor 3 subunit K">
    <location>
        <begin position="1"/>
        <end position="218"/>
    </location>
</feature>
<feature type="domain" description="PCI" evidence="2">
    <location>
        <begin position="42"/>
        <end position="204"/>
    </location>
</feature>
<protein>
    <recommendedName>
        <fullName evidence="1">Eukaryotic translation initiation factor 3 subunit K</fullName>
        <shortName evidence="1">eIF3k</shortName>
    </recommendedName>
    <alternativeName>
        <fullName evidence="1">Eukaryotic translation initiation factor 3 subunit 12</fullName>
    </alternativeName>
    <alternativeName>
        <fullName evidence="1">eIF-3 p25</fullName>
    </alternativeName>
</protein>
<keyword id="KW-0963">Cytoplasm</keyword>
<keyword id="KW-0396">Initiation factor</keyword>
<keyword id="KW-0539">Nucleus</keyword>
<keyword id="KW-0648">Protein biosynthesis</keyword>
<keyword id="KW-1185">Reference proteome</keyword>
<sequence>MASFDQMRANVGKLLRGIDRYNPENLATLERYVETQAKENAYDLEANLAVLKLYQFNPAFFQTTVTAQILLKALTNLPHTDFTLCKCMIDQAHQEERPIRQILYLGDLLETCHFQSFWQALDENLDLIDGITGFEDSVRKFICHVVGITYQHIDRWLLAEMLGDLSEPQLRVWMSKYGWMESENGKIFVCNQEENIKPKNIVEKIDFDSVSGIMASSQ</sequence>
<accession>Q28C65</accession>
<accession>Q5HZD6</accession>
<reference key="1">
    <citation type="submission" date="2006-10" db="EMBL/GenBank/DDBJ databases">
        <authorList>
            <consortium name="Sanger Xenopus tropicalis EST/cDNA project"/>
        </authorList>
    </citation>
    <scope>NUCLEOTIDE SEQUENCE [LARGE SCALE MRNA]</scope>
    <source>
        <tissue>Tadpole</tissue>
    </source>
</reference>
<reference key="2">
    <citation type="submission" date="2007-12" db="EMBL/GenBank/DDBJ databases">
        <authorList>
            <consortium name="NIH - Xenopus Gene Collection (XGC) project"/>
        </authorList>
    </citation>
    <scope>NUCLEOTIDE SEQUENCE [LARGE SCALE MRNA]</scope>
    <source>
        <strain>PopA</strain>
    </source>
</reference>
<gene>
    <name type="primary">eif3k</name>
    <name type="synonym">eif3s12</name>
    <name type="ORF">TTpA007f24.1</name>
</gene>
<proteinExistence type="evidence at transcript level"/>
<organism>
    <name type="scientific">Xenopus tropicalis</name>
    <name type="common">Western clawed frog</name>
    <name type="synonym">Silurana tropicalis</name>
    <dbReference type="NCBI Taxonomy" id="8364"/>
    <lineage>
        <taxon>Eukaryota</taxon>
        <taxon>Metazoa</taxon>
        <taxon>Chordata</taxon>
        <taxon>Craniata</taxon>
        <taxon>Vertebrata</taxon>
        <taxon>Euteleostomi</taxon>
        <taxon>Amphibia</taxon>
        <taxon>Batrachia</taxon>
        <taxon>Anura</taxon>
        <taxon>Pipoidea</taxon>
        <taxon>Pipidae</taxon>
        <taxon>Xenopodinae</taxon>
        <taxon>Xenopus</taxon>
        <taxon>Silurana</taxon>
    </lineage>
</organism>
<evidence type="ECO:0000255" key="1">
    <source>
        <dbReference type="HAMAP-Rule" id="MF_03010"/>
    </source>
</evidence>
<evidence type="ECO:0000255" key="2">
    <source>
        <dbReference type="PROSITE-ProRule" id="PRU01185"/>
    </source>
</evidence>